<protein>
    <recommendedName>
        <fullName evidence="1">PKHD-type hydroxylase XC_1340</fullName>
        <ecNumber evidence="1">1.14.11.-</ecNumber>
    </recommendedName>
</protein>
<feature type="chain" id="PRO_1000061747" description="PKHD-type hydroxylase XC_1340">
    <location>
        <begin position="1"/>
        <end position="228"/>
    </location>
</feature>
<feature type="domain" description="Fe2OG dioxygenase" evidence="1">
    <location>
        <begin position="78"/>
        <end position="180"/>
    </location>
</feature>
<feature type="binding site" evidence="1">
    <location>
        <position position="96"/>
    </location>
    <ligand>
        <name>Fe cation</name>
        <dbReference type="ChEBI" id="CHEBI:24875"/>
    </ligand>
</feature>
<feature type="binding site" evidence="1">
    <location>
        <position position="98"/>
    </location>
    <ligand>
        <name>Fe cation</name>
        <dbReference type="ChEBI" id="CHEBI:24875"/>
    </ligand>
</feature>
<feature type="binding site" evidence="1">
    <location>
        <position position="161"/>
    </location>
    <ligand>
        <name>Fe cation</name>
        <dbReference type="ChEBI" id="CHEBI:24875"/>
    </ligand>
</feature>
<feature type="binding site" evidence="1">
    <location>
        <position position="171"/>
    </location>
    <ligand>
        <name>2-oxoglutarate</name>
        <dbReference type="ChEBI" id="CHEBI:16810"/>
    </ligand>
</feature>
<gene>
    <name type="ordered locus">XC_1340</name>
</gene>
<organism>
    <name type="scientific">Xanthomonas campestris pv. campestris (strain 8004)</name>
    <dbReference type="NCBI Taxonomy" id="314565"/>
    <lineage>
        <taxon>Bacteria</taxon>
        <taxon>Pseudomonadati</taxon>
        <taxon>Pseudomonadota</taxon>
        <taxon>Gammaproteobacteria</taxon>
        <taxon>Lysobacterales</taxon>
        <taxon>Lysobacteraceae</taxon>
        <taxon>Xanthomonas</taxon>
    </lineage>
</organism>
<accession>Q4UX14</accession>
<dbReference type="EC" id="1.14.11.-" evidence="1"/>
<dbReference type="EMBL" id="CP000050">
    <property type="protein sequence ID" value="AAY48409.1"/>
    <property type="molecule type" value="Genomic_DNA"/>
</dbReference>
<dbReference type="RefSeq" id="WP_011037901.1">
    <property type="nucleotide sequence ID" value="NZ_CP155948.1"/>
</dbReference>
<dbReference type="SMR" id="Q4UX14"/>
<dbReference type="KEGG" id="xcb:XC_1340"/>
<dbReference type="HOGENOM" id="CLU_106663_0_0_6"/>
<dbReference type="Proteomes" id="UP000000420">
    <property type="component" value="Chromosome"/>
</dbReference>
<dbReference type="GO" id="GO:0016706">
    <property type="term" value="F:2-oxoglutarate-dependent dioxygenase activity"/>
    <property type="evidence" value="ECO:0007669"/>
    <property type="project" value="UniProtKB-UniRule"/>
</dbReference>
<dbReference type="GO" id="GO:0005506">
    <property type="term" value="F:iron ion binding"/>
    <property type="evidence" value="ECO:0007669"/>
    <property type="project" value="UniProtKB-UniRule"/>
</dbReference>
<dbReference type="GO" id="GO:0031418">
    <property type="term" value="F:L-ascorbic acid binding"/>
    <property type="evidence" value="ECO:0007669"/>
    <property type="project" value="UniProtKB-KW"/>
</dbReference>
<dbReference type="GO" id="GO:0006974">
    <property type="term" value="P:DNA damage response"/>
    <property type="evidence" value="ECO:0007669"/>
    <property type="project" value="TreeGrafter"/>
</dbReference>
<dbReference type="GO" id="GO:0006879">
    <property type="term" value="P:intracellular iron ion homeostasis"/>
    <property type="evidence" value="ECO:0007669"/>
    <property type="project" value="TreeGrafter"/>
</dbReference>
<dbReference type="FunFam" id="2.60.120.620:FF:000006">
    <property type="entry name" value="PKHD-type hydroxylase YbiX"/>
    <property type="match status" value="1"/>
</dbReference>
<dbReference type="Gene3D" id="2.60.120.620">
    <property type="entry name" value="q2cbj1_9rhob like domain"/>
    <property type="match status" value="1"/>
</dbReference>
<dbReference type="Gene3D" id="4.10.860.20">
    <property type="entry name" value="Rabenosyn, Rab binding domain"/>
    <property type="match status" value="1"/>
</dbReference>
<dbReference type="HAMAP" id="MF_00657">
    <property type="entry name" value="Hydroxyl_YbiX"/>
    <property type="match status" value="1"/>
</dbReference>
<dbReference type="InterPro" id="IPR005123">
    <property type="entry name" value="Oxoglu/Fe-dep_dioxygenase_dom"/>
</dbReference>
<dbReference type="InterPro" id="IPR041097">
    <property type="entry name" value="PKHD_C"/>
</dbReference>
<dbReference type="InterPro" id="IPR023550">
    <property type="entry name" value="PKHD_hydroxylase"/>
</dbReference>
<dbReference type="InterPro" id="IPR006620">
    <property type="entry name" value="Pro_4_hyd_alph"/>
</dbReference>
<dbReference type="InterPro" id="IPR044862">
    <property type="entry name" value="Pro_4_hyd_alph_FE2OG_OXY"/>
</dbReference>
<dbReference type="NCBIfam" id="NF003973">
    <property type="entry name" value="PRK05467.1-2"/>
    <property type="match status" value="1"/>
</dbReference>
<dbReference type="NCBIfam" id="NF003974">
    <property type="entry name" value="PRK05467.1-3"/>
    <property type="match status" value="1"/>
</dbReference>
<dbReference type="NCBIfam" id="NF003975">
    <property type="entry name" value="PRK05467.1-4"/>
    <property type="match status" value="1"/>
</dbReference>
<dbReference type="PANTHER" id="PTHR41536">
    <property type="entry name" value="PKHD-TYPE HYDROXYLASE YBIX"/>
    <property type="match status" value="1"/>
</dbReference>
<dbReference type="PANTHER" id="PTHR41536:SF1">
    <property type="entry name" value="PKHD-TYPE HYDROXYLASE YBIX"/>
    <property type="match status" value="1"/>
</dbReference>
<dbReference type="Pfam" id="PF13640">
    <property type="entry name" value="2OG-FeII_Oxy_3"/>
    <property type="match status" value="1"/>
</dbReference>
<dbReference type="Pfam" id="PF18331">
    <property type="entry name" value="PKHD_C"/>
    <property type="match status" value="1"/>
</dbReference>
<dbReference type="SMART" id="SM00702">
    <property type="entry name" value="P4Hc"/>
    <property type="match status" value="1"/>
</dbReference>
<dbReference type="SUPFAM" id="SSF51197">
    <property type="entry name" value="Clavaminate synthase-like"/>
    <property type="match status" value="1"/>
</dbReference>
<dbReference type="PROSITE" id="PS51471">
    <property type="entry name" value="FE2OG_OXY"/>
    <property type="match status" value="1"/>
</dbReference>
<comment type="cofactor">
    <cofactor evidence="1">
        <name>Fe(2+)</name>
        <dbReference type="ChEBI" id="CHEBI:29033"/>
    </cofactor>
    <text evidence="1">Binds 1 Fe(2+) ion per subunit.</text>
</comment>
<comment type="cofactor">
    <cofactor evidence="1">
        <name>L-ascorbate</name>
        <dbReference type="ChEBI" id="CHEBI:38290"/>
    </cofactor>
</comment>
<name>Y1340_XANC8</name>
<evidence type="ECO:0000255" key="1">
    <source>
        <dbReference type="HAMAP-Rule" id="MF_00657"/>
    </source>
</evidence>
<reference key="1">
    <citation type="journal article" date="2005" name="Genome Res.">
        <title>Comparative and functional genomic analyses of the pathogenicity of phytopathogen Xanthomonas campestris pv. campestris.</title>
        <authorList>
            <person name="Qian W."/>
            <person name="Jia Y."/>
            <person name="Ren S.-X."/>
            <person name="He Y.-Q."/>
            <person name="Feng J.-X."/>
            <person name="Lu L.-F."/>
            <person name="Sun Q."/>
            <person name="Ying G."/>
            <person name="Tang D.-J."/>
            <person name="Tang H."/>
            <person name="Wu W."/>
            <person name="Hao P."/>
            <person name="Wang L."/>
            <person name="Jiang B.-L."/>
            <person name="Zeng S."/>
            <person name="Gu W.-Y."/>
            <person name="Lu G."/>
            <person name="Rong L."/>
            <person name="Tian Y."/>
            <person name="Yao Z."/>
            <person name="Fu G."/>
            <person name="Chen B."/>
            <person name="Fang R."/>
            <person name="Qiang B."/>
            <person name="Chen Z."/>
            <person name="Zhao G.-P."/>
            <person name="Tang J.-L."/>
            <person name="He C."/>
        </authorList>
    </citation>
    <scope>NUCLEOTIDE SEQUENCE [LARGE SCALE GENOMIC DNA]</scope>
    <source>
        <strain>8004</strain>
    </source>
</reference>
<sequence length="228" mass="25206">MLLPIPDVLTPAQLSQLSERLDAADWADGRITAGHQSAQAKDNAQLPEDSPIAREASALVLDALSRSSTFFSAALPRRIYPPLFNRYSGGQSFGYHVDNAVRYDRSRGGADPVRTDVSATLFLSDPDSYDGGELVIEDTYGTQSVKLPAGHLVIYPGTSLHKVMPVTRGTRVASFFWIQSMLRNDAQRRLLFELDVSIRRLTQDTPGHPSLIQLTGVYHNLLRQWADV</sequence>
<proteinExistence type="inferred from homology"/>
<keyword id="KW-0223">Dioxygenase</keyword>
<keyword id="KW-0408">Iron</keyword>
<keyword id="KW-0479">Metal-binding</keyword>
<keyword id="KW-0560">Oxidoreductase</keyword>
<keyword id="KW-0847">Vitamin C</keyword>